<name>RL4_ACTP7</name>
<proteinExistence type="inferred from homology"/>
<comment type="function">
    <text evidence="1">One of the primary rRNA binding proteins, this protein initially binds near the 5'-end of the 23S rRNA. It is important during the early stages of 50S assembly. It makes multiple contacts with different domains of the 23S rRNA in the assembled 50S subunit and ribosome.</text>
</comment>
<comment type="function">
    <text evidence="1">Forms part of the polypeptide exit tunnel.</text>
</comment>
<comment type="subunit">
    <text evidence="1">Part of the 50S ribosomal subunit.</text>
</comment>
<comment type="similarity">
    <text evidence="1">Belongs to the universal ribosomal protein uL4 family.</text>
</comment>
<keyword id="KW-0687">Ribonucleoprotein</keyword>
<keyword id="KW-0689">Ribosomal protein</keyword>
<keyword id="KW-0694">RNA-binding</keyword>
<keyword id="KW-0699">rRNA-binding</keyword>
<feature type="chain" id="PRO_1000142068" description="Large ribosomal subunit protein uL4">
    <location>
        <begin position="1"/>
        <end position="200"/>
    </location>
</feature>
<feature type="region of interest" description="Disordered" evidence="2">
    <location>
        <begin position="43"/>
        <end position="71"/>
    </location>
</feature>
<organism>
    <name type="scientific">Actinobacillus pleuropneumoniae serotype 7 (strain AP76)</name>
    <dbReference type="NCBI Taxonomy" id="537457"/>
    <lineage>
        <taxon>Bacteria</taxon>
        <taxon>Pseudomonadati</taxon>
        <taxon>Pseudomonadota</taxon>
        <taxon>Gammaproteobacteria</taxon>
        <taxon>Pasteurellales</taxon>
        <taxon>Pasteurellaceae</taxon>
        <taxon>Actinobacillus</taxon>
    </lineage>
</organism>
<accession>B3GZ12</accession>
<protein>
    <recommendedName>
        <fullName evidence="1">Large ribosomal subunit protein uL4</fullName>
    </recommendedName>
    <alternativeName>
        <fullName evidence="3">50S ribosomal protein L4</fullName>
    </alternativeName>
</protein>
<evidence type="ECO:0000255" key="1">
    <source>
        <dbReference type="HAMAP-Rule" id="MF_01328"/>
    </source>
</evidence>
<evidence type="ECO:0000256" key="2">
    <source>
        <dbReference type="SAM" id="MobiDB-lite"/>
    </source>
</evidence>
<evidence type="ECO:0000305" key="3"/>
<sequence length="200" mass="22012">MELQVVGANALTVSETTFGREFNEALIHQVVVAYAAGARQGSRAQKTRAEVSGSGKKPWRQKGTGRARSGDIKSPIWRSGGITFAAKPQDHSQKVNKKMYRGAIKSILSELVRQERLVVVEKFEIEAPKTKVLVQKLKDLALNDALIITANLDENLFLAARNLYKVDVRDVQGIDPVSLIAFDKVVITADAVKQIEEMLA</sequence>
<dbReference type="EMBL" id="CP001091">
    <property type="protein sequence ID" value="ACE62498.1"/>
    <property type="molecule type" value="Genomic_DNA"/>
</dbReference>
<dbReference type="RefSeq" id="WP_005599282.1">
    <property type="nucleotide sequence ID" value="NC_010939.1"/>
</dbReference>
<dbReference type="SMR" id="B3GZ12"/>
<dbReference type="GeneID" id="92743654"/>
<dbReference type="KEGG" id="apa:APP7_1846"/>
<dbReference type="HOGENOM" id="CLU_041575_5_2_6"/>
<dbReference type="Proteomes" id="UP000001226">
    <property type="component" value="Chromosome"/>
</dbReference>
<dbReference type="GO" id="GO:1990904">
    <property type="term" value="C:ribonucleoprotein complex"/>
    <property type="evidence" value="ECO:0007669"/>
    <property type="project" value="UniProtKB-KW"/>
</dbReference>
<dbReference type="GO" id="GO:0005840">
    <property type="term" value="C:ribosome"/>
    <property type="evidence" value="ECO:0007669"/>
    <property type="project" value="UniProtKB-KW"/>
</dbReference>
<dbReference type="GO" id="GO:0019843">
    <property type="term" value="F:rRNA binding"/>
    <property type="evidence" value="ECO:0007669"/>
    <property type="project" value="UniProtKB-UniRule"/>
</dbReference>
<dbReference type="GO" id="GO:0003735">
    <property type="term" value="F:structural constituent of ribosome"/>
    <property type="evidence" value="ECO:0007669"/>
    <property type="project" value="InterPro"/>
</dbReference>
<dbReference type="GO" id="GO:0006412">
    <property type="term" value="P:translation"/>
    <property type="evidence" value="ECO:0007669"/>
    <property type="project" value="UniProtKB-UniRule"/>
</dbReference>
<dbReference type="FunFam" id="3.40.1370.10:FF:000001">
    <property type="entry name" value="50S ribosomal protein L4"/>
    <property type="match status" value="1"/>
</dbReference>
<dbReference type="Gene3D" id="3.40.1370.10">
    <property type="match status" value="1"/>
</dbReference>
<dbReference type="HAMAP" id="MF_01328_B">
    <property type="entry name" value="Ribosomal_uL4_B"/>
    <property type="match status" value="1"/>
</dbReference>
<dbReference type="InterPro" id="IPR002136">
    <property type="entry name" value="Ribosomal_uL4"/>
</dbReference>
<dbReference type="InterPro" id="IPR013005">
    <property type="entry name" value="Ribosomal_uL4-like"/>
</dbReference>
<dbReference type="InterPro" id="IPR023574">
    <property type="entry name" value="Ribosomal_uL4_dom_sf"/>
</dbReference>
<dbReference type="NCBIfam" id="TIGR03953">
    <property type="entry name" value="rplD_bact"/>
    <property type="match status" value="1"/>
</dbReference>
<dbReference type="PANTHER" id="PTHR10746">
    <property type="entry name" value="50S RIBOSOMAL PROTEIN L4"/>
    <property type="match status" value="1"/>
</dbReference>
<dbReference type="PANTHER" id="PTHR10746:SF6">
    <property type="entry name" value="LARGE RIBOSOMAL SUBUNIT PROTEIN UL4M"/>
    <property type="match status" value="1"/>
</dbReference>
<dbReference type="Pfam" id="PF00573">
    <property type="entry name" value="Ribosomal_L4"/>
    <property type="match status" value="1"/>
</dbReference>
<dbReference type="SUPFAM" id="SSF52166">
    <property type="entry name" value="Ribosomal protein L4"/>
    <property type="match status" value="1"/>
</dbReference>
<reference key="1">
    <citation type="submission" date="2008-06" db="EMBL/GenBank/DDBJ databases">
        <title>Genome and proteome analysis of A. pleuropneumoniae serotype 7.</title>
        <authorList>
            <person name="Linke B."/>
            <person name="Buettner F."/>
            <person name="Martinez-Arias R."/>
            <person name="Goesmann A."/>
            <person name="Baltes N."/>
            <person name="Tegetmeyer H."/>
            <person name="Singh M."/>
            <person name="Gerlach G.F."/>
        </authorList>
    </citation>
    <scope>NUCLEOTIDE SEQUENCE [LARGE SCALE GENOMIC DNA]</scope>
    <source>
        <strain>AP76</strain>
    </source>
</reference>
<gene>
    <name evidence="1" type="primary">rplD</name>
    <name type="ordered locus">APP7_1846</name>
</gene>